<dbReference type="EMBL" id="AY653733">
    <property type="protein sequence ID" value="AAV51141.1"/>
    <property type="molecule type" value="Genomic_DNA"/>
</dbReference>
<dbReference type="SMR" id="Q5UQX4"/>
<dbReference type="KEGG" id="vg:9925553"/>
<dbReference type="OrthoDB" id="7928at10239"/>
<dbReference type="Proteomes" id="UP000001134">
    <property type="component" value="Genome"/>
</dbReference>
<dbReference type="InterPro" id="IPR009772">
    <property type="entry name" value="CDC123"/>
</dbReference>
<dbReference type="PANTHER" id="PTHR15323:SF6">
    <property type="entry name" value="CELL DIVISION CYCLE PROTEIN 123 HOMOLOG"/>
    <property type="match status" value="1"/>
</dbReference>
<dbReference type="PANTHER" id="PTHR15323">
    <property type="entry name" value="D123 PROTEIN"/>
    <property type="match status" value="1"/>
</dbReference>
<dbReference type="Pfam" id="PF07065">
    <property type="entry name" value="D123"/>
    <property type="match status" value="1"/>
</dbReference>
<keyword id="KW-1185">Reference proteome</keyword>
<name>YL884_MIMIV</name>
<accession>Q5UQX4</accession>
<gene>
    <name type="ordered locus">MIMI_L884</name>
</gene>
<organism>
    <name type="scientific">Acanthamoeba polyphaga mimivirus</name>
    <name type="common">APMV</name>
    <dbReference type="NCBI Taxonomy" id="212035"/>
    <lineage>
        <taxon>Viruses</taxon>
        <taxon>Varidnaviria</taxon>
        <taxon>Bamfordvirae</taxon>
        <taxon>Nucleocytoviricota</taxon>
        <taxon>Megaviricetes</taxon>
        <taxon>Imitervirales</taxon>
        <taxon>Mimiviridae</taxon>
        <taxon>Megamimivirinae</taxon>
        <taxon>Mimivirus</taxon>
        <taxon>Mimivirus bradfordmassiliense</taxon>
    </lineage>
</organism>
<comment type="similarity">
    <text evidence="1">Belongs to the CDC123 family.</text>
</comment>
<feature type="chain" id="PRO_0000247380" description="Putative CDC123-like protein L884">
    <location>
        <begin position="1"/>
        <end position="323"/>
    </location>
</feature>
<protein>
    <recommendedName>
        <fullName>Putative CDC123-like protein L884</fullName>
    </recommendedName>
</protein>
<evidence type="ECO:0000305" key="1"/>
<organismHost>
    <name type="scientific">Acanthamoeba polyphaga</name>
    <name type="common">Amoeba</name>
    <dbReference type="NCBI Taxonomy" id="5757"/>
</organismHost>
<proteinExistence type="inferred from homology"/>
<sequence length="323" mass="38398">MDLSPYIKISERDNFTIYSYPKKYLELFLDELFYQKSIEINDDHTFKMSKNGYIIDNFNKESSVDFEYLRQSQIAVYWIHEWYDYLIKNSDNKNITFKTKLIELSNEDIESLFNFKTYGIIPESLLKIIDDSITEINNLCFVRTDAYSPKDLVFENKIDNLKVSDALTAIKLITDSERCCQKLFSNDQIISKYLAIREYVNLDTNYEFRCFIYNWNLRAICQSGFEYNSELHAKKKIIRDSILKFWNKFESICPYSECTMDIIYDNNFKNTLNDSCIMVIEFNSFGPHMNADSGLYDWDRDYILLTKSNQPHFLLAEKPLNTI</sequence>
<reference key="1">
    <citation type="journal article" date="2004" name="Science">
        <title>The 1.2-megabase genome sequence of Mimivirus.</title>
        <authorList>
            <person name="Raoult D."/>
            <person name="Audic S."/>
            <person name="Robert C."/>
            <person name="Abergel C."/>
            <person name="Renesto P."/>
            <person name="Ogata H."/>
            <person name="La Scola B."/>
            <person name="Susan M."/>
            <person name="Claverie J.-M."/>
        </authorList>
    </citation>
    <scope>NUCLEOTIDE SEQUENCE [LARGE SCALE GENOMIC DNA]</scope>
    <source>
        <strain>Rowbotham-Bradford</strain>
    </source>
</reference>